<accession>Q74C83</accession>
<proteinExistence type="inferred from homology"/>
<name>CLPX_GEOSL</name>
<comment type="function">
    <text evidence="1">ATP-dependent specificity component of the Clp protease. It directs the protease to specific substrates. Can perform chaperone functions in the absence of ClpP.</text>
</comment>
<comment type="subunit">
    <text evidence="1">Component of the ClpX-ClpP complex. Forms a hexameric ring that, in the presence of ATP, binds to fourteen ClpP subunits assembled into a disk-like structure with a central cavity, resembling the structure of eukaryotic proteasomes.</text>
</comment>
<comment type="similarity">
    <text evidence="1">Belongs to the ClpX chaperone family.</text>
</comment>
<protein>
    <recommendedName>
        <fullName evidence="1">ATP-dependent Clp protease ATP-binding subunit ClpX</fullName>
    </recommendedName>
</protein>
<gene>
    <name evidence="1" type="primary">clpX</name>
    <name type="ordered locus">GSU1791</name>
</gene>
<keyword id="KW-0067">ATP-binding</keyword>
<keyword id="KW-0143">Chaperone</keyword>
<keyword id="KW-0479">Metal-binding</keyword>
<keyword id="KW-0547">Nucleotide-binding</keyword>
<keyword id="KW-1185">Reference proteome</keyword>
<keyword id="KW-0862">Zinc</keyword>
<evidence type="ECO:0000255" key="1">
    <source>
        <dbReference type="HAMAP-Rule" id="MF_00175"/>
    </source>
</evidence>
<evidence type="ECO:0000255" key="2">
    <source>
        <dbReference type="PROSITE-ProRule" id="PRU01250"/>
    </source>
</evidence>
<dbReference type="EMBL" id="AE017180">
    <property type="protein sequence ID" value="AAR35168.1"/>
    <property type="molecule type" value="Genomic_DNA"/>
</dbReference>
<dbReference type="RefSeq" id="NP_952841.1">
    <property type="nucleotide sequence ID" value="NC_002939.5"/>
</dbReference>
<dbReference type="RefSeq" id="WP_010942435.1">
    <property type="nucleotide sequence ID" value="NC_002939.5"/>
</dbReference>
<dbReference type="SMR" id="Q74C83"/>
<dbReference type="FunCoup" id="Q74C83">
    <property type="interactions" value="442"/>
</dbReference>
<dbReference type="STRING" id="243231.GSU1791"/>
<dbReference type="EnsemblBacteria" id="AAR35168">
    <property type="protein sequence ID" value="AAR35168"/>
    <property type="gene ID" value="GSU1791"/>
</dbReference>
<dbReference type="KEGG" id="gsu:GSU1791"/>
<dbReference type="PATRIC" id="fig|243231.5.peg.1829"/>
<dbReference type="eggNOG" id="COG1219">
    <property type="taxonomic scope" value="Bacteria"/>
</dbReference>
<dbReference type="HOGENOM" id="CLU_014218_8_2_7"/>
<dbReference type="InParanoid" id="Q74C83"/>
<dbReference type="OrthoDB" id="9804062at2"/>
<dbReference type="Proteomes" id="UP000000577">
    <property type="component" value="Chromosome"/>
</dbReference>
<dbReference type="GO" id="GO:0009376">
    <property type="term" value="C:HslUV protease complex"/>
    <property type="evidence" value="ECO:0000318"/>
    <property type="project" value="GO_Central"/>
</dbReference>
<dbReference type="GO" id="GO:0005524">
    <property type="term" value="F:ATP binding"/>
    <property type="evidence" value="ECO:0000318"/>
    <property type="project" value="GO_Central"/>
</dbReference>
<dbReference type="GO" id="GO:0016887">
    <property type="term" value="F:ATP hydrolysis activity"/>
    <property type="evidence" value="ECO:0000318"/>
    <property type="project" value="GO_Central"/>
</dbReference>
<dbReference type="GO" id="GO:0140662">
    <property type="term" value="F:ATP-dependent protein folding chaperone"/>
    <property type="evidence" value="ECO:0007669"/>
    <property type="project" value="InterPro"/>
</dbReference>
<dbReference type="GO" id="GO:0046983">
    <property type="term" value="F:protein dimerization activity"/>
    <property type="evidence" value="ECO:0007669"/>
    <property type="project" value="InterPro"/>
</dbReference>
<dbReference type="GO" id="GO:0051082">
    <property type="term" value="F:unfolded protein binding"/>
    <property type="evidence" value="ECO:0007669"/>
    <property type="project" value="UniProtKB-UniRule"/>
</dbReference>
<dbReference type="GO" id="GO:0008270">
    <property type="term" value="F:zinc ion binding"/>
    <property type="evidence" value="ECO:0007669"/>
    <property type="project" value="InterPro"/>
</dbReference>
<dbReference type="GO" id="GO:0051301">
    <property type="term" value="P:cell division"/>
    <property type="evidence" value="ECO:0000318"/>
    <property type="project" value="GO_Central"/>
</dbReference>
<dbReference type="GO" id="GO:0051603">
    <property type="term" value="P:proteolysis involved in protein catabolic process"/>
    <property type="evidence" value="ECO:0000318"/>
    <property type="project" value="GO_Central"/>
</dbReference>
<dbReference type="CDD" id="cd19497">
    <property type="entry name" value="RecA-like_ClpX"/>
    <property type="match status" value="1"/>
</dbReference>
<dbReference type="FunFam" id="1.10.8.60:FF:000002">
    <property type="entry name" value="ATP-dependent Clp protease ATP-binding subunit ClpX"/>
    <property type="match status" value="1"/>
</dbReference>
<dbReference type="FunFam" id="3.40.50.300:FF:000005">
    <property type="entry name" value="ATP-dependent Clp protease ATP-binding subunit ClpX"/>
    <property type="match status" value="1"/>
</dbReference>
<dbReference type="Gene3D" id="1.10.8.60">
    <property type="match status" value="1"/>
</dbReference>
<dbReference type="Gene3D" id="6.20.220.10">
    <property type="entry name" value="ClpX chaperone, C4-type zinc finger domain"/>
    <property type="match status" value="1"/>
</dbReference>
<dbReference type="Gene3D" id="3.40.50.300">
    <property type="entry name" value="P-loop containing nucleotide triphosphate hydrolases"/>
    <property type="match status" value="1"/>
</dbReference>
<dbReference type="HAMAP" id="MF_00175">
    <property type="entry name" value="ClpX"/>
    <property type="match status" value="1"/>
</dbReference>
<dbReference type="InterPro" id="IPR003593">
    <property type="entry name" value="AAA+_ATPase"/>
</dbReference>
<dbReference type="InterPro" id="IPR050052">
    <property type="entry name" value="ATP-dep_Clp_protease_ClpX"/>
</dbReference>
<dbReference type="InterPro" id="IPR003959">
    <property type="entry name" value="ATPase_AAA_core"/>
</dbReference>
<dbReference type="InterPro" id="IPR019489">
    <property type="entry name" value="Clp_ATPase_C"/>
</dbReference>
<dbReference type="InterPro" id="IPR004487">
    <property type="entry name" value="Clp_protease_ATP-bd_su_ClpX"/>
</dbReference>
<dbReference type="InterPro" id="IPR046425">
    <property type="entry name" value="ClpX_bact"/>
</dbReference>
<dbReference type="InterPro" id="IPR027417">
    <property type="entry name" value="P-loop_NTPase"/>
</dbReference>
<dbReference type="InterPro" id="IPR010603">
    <property type="entry name" value="Znf_CppX_C4"/>
</dbReference>
<dbReference type="InterPro" id="IPR038366">
    <property type="entry name" value="Znf_CppX_C4_sf"/>
</dbReference>
<dbReference type="NCBIfam" id="TIGR00382">
    <property type="entry name" value="clpX"/>
    <property type="match status" value="1"/>
</dbReference>
<dbReference type="NCBIfam" id="NF003745">
    <property type="entry name" value="PRK05342.1"/>
    <property type="match status" value="1"/>
</dbReference>
<dbReference type="PANTHER" id="PTHR48102:SF7">
    <property type="entry name" value="ATP-DEPENDENT CLP PROTEASE ATP-BINDING SUBUNIT CLPX-LIKE, MITOCHONDRIAL"/>
    <property type="match status" value="1"/>
</dbReference>
<dbReference type="PANTHER" id="PTHR48102">
    <property type="entry name" value="ATP-DEPENDENT CLP PROTEASE ATP-BINDING SUBUNIT CLPX-LIKE, MITOCHONDRIAL-RELATED"/>
    <property type="match status" value="1"/>
</dbReference>
<dbReference type="Pfam" id="PF07724">
    <property type="entry name" value="AAA_2"/>
    <property type="match status" value="1"/>
</dbReference>
<dbReference type="Pfam" id="PF10431">
    <property type="entry name" value="ClpB_D2-small"/>
    <property type="match status" value="1"/>
</dbReference>
<dbReference type="Pfam" id="PF06689">
    <property type="entry name" value="zf-C4_ClpX"/>
    <property type="match status" value="1"/>
</dbReference>
<dbReference type="SMART" id="SM00382">
    <property type="entry name" value="AAA"/>
    <property type="match status" value="1"/>
</dbReference>
<dbReference type="SMART" id="SM01086">
    <property type="entry name" value="ClpB_D2-small"/>
    <property type="match status" value="1"/>
</dbReference>
<dbReference type="SMART" id="SM00994">
    <property type="entry name" value="zf-C4_ClpX"/>
    <property type="match status" value="1"/>
</dbReference>
<dbReference type="SUPFAM" id="SSF57716">
    <property type="entry name" value="Glucocorticoid receptor-like (DNA-binding domain)"/>
    <property type="match status" value="1"/>
</dbReference>
<dbReference type="SUPFAM" id="SSF52540">
    <property type="entry name" value="P-loop containing nucleoside triphosphate hydrolases"/>
    <property type="match status" value="1"/>
</dbReference>
<dbReference type="PROSITE" id="PS51902">
    <property type="entry name" value="CLPX_ZB"/>
    <property type="match status" value="1"/>
</dbReference>
<organism>
    <name type="scientific">Geobacter sulfurreducens (strain ATCC 51573 / DSM 12127 / PCA)</name>
    <dbReference type="NCBI Taxonomy" id="243231"/>
    <lineage>
        <taxon>Bacteria</taxon>
        <taxon>Pseudomonadati</taxon>
        <taxon>Thermodesulfobacteriota</taxon>
        <taxon>Desulfuromonadia</taxon>
        <taxon>Geobacterales</taxon>
        <taxon>Geobacteraceae</taxon>
        <taxon>Geobacter</taxon>
    </lineage>
</organism>
<reference key="1">
    <citation type="journal article" date="2003" name="Science">
        <title>Genome of Geobacter sulfurreducens: metal reduction in subsurface environments.</title>
        <authorList>
            <person name="Methe B.A."/>
            <person name="Nelson K.E."/>
            <person name="Eisen J.A."/>
            <person name="Paulsen I.T."/>
            <person name="Nelson W.C."/>
            <person name="Heidelberg J.F."/>
            <person name="Wu D."/>
            <person name="Wu M."/>
            <person name="Ward N.L."/>
            <person name="Beanan M.J."/>
            <person name="Dodson R.J."/>
            <person name="Madupu R."/>
            <person name="Brinkac L.M."/>
            <person name="Daugherty S.C."/>
            <person name="DeBoy R.T."/>
            <person name="Durkin A.S."/>
            <person name="Gwinn M.L."/>
            <person name="Kolonay J.F."/>
            <person name="Sullivan S.A."/>
            <person name="Haft D.H."/>
            <person name="Selengut J."/>
            <person name="Davidsen T.M."/>
            <person name="Zafar N."/>
            <person name="White O."/>
            <person name="Tran B."/>
            <person name="Romero C."/>
            <person name="Forberger H.A."/>
            <person name="Weidman J.F."/>
            <person name="Khouri H.M."/>
            <person name="Feldblyum T.V."/>
            <person name="Utterback T.R."/>
            <person name="Van Aken S.E."/>
            <person name="Lovley D.R."/>
            <person name="Fraser C.M."/>
        </authorList>
    </citation>
    <scope>NUCLEOTIDE SEQUENCE [LARGE SCALE GENOMIC DNA]</scope>
    <source>
        <strain>ATCC 51573 / DSM 12127 / PCA</strain>
    </source>
</reference>
<sequence length="417" mass="46129">MSRRNDGSDNLTCSFCGKSQDEVKKLIAGPTVYICDECIELCNDIIAEESKLEEAMGPDVKKLPKPREIKDVLDEYVIGQDQAKKVLAVAVYNHYKRIESMGKPSDVEMQKSNILLLGPTGSGKTLLAQTLARILKVPFAMADATNLTEAGYVGEDVENIILNLLQAADYDVERAQKGIIYIDEIDKIARKSDSPSITRDVSGEGVQQALLKIIEGTVASVPPKGGRKHPQQEFLKVDTTNILFICGGAFAGLDSIIQQRIGVKKLGFGADVKSKVEKRAGELLTEVTPEDLLKFGFIPEFIGRLPVLATLRELDETAMVQILKEPKNALIKQYQKLFEMEHVKLKFTDGSLVAISREALKRKTGARGLRSILENAMLDIMYEIPSQTMVKEVVINEDVIYNKEKPIIVYENVAESA</sequence>
<feature type="chain" id="PRO_0000160360" description="ATP-dependent Clp protease ATP-binding subunit ClpX">
    <location>
        <begin position="1"/>
        <end position="417"/>
    </location>
</feature>
<feature type="domain" description="ClpX-type ZB" evidence="2">
    <location>
        <begin position="1"/>
        <end position="54"/>
    </location>
</feature>
<feature type="binding site" evidence="2">
    <location>
        <position position="13"/>
    </location>
    <ligand>
        <name>Zn(2+)</name>
        <dbReference type="ChEBI" id="CHEBI:29105"/>
    </ligand>
</feature>
<feature type="binding site" evidence="2">
    <location>
        <position position="16"/>
    </location>
    <ligand>
        <name>Zn(2+)</name>
        <dbReference type="ChEBI" id="CHEBI:29105"/>
    </ligand>
</feature>
<feature type="binding site" evidence="2">
    <location>
        <position position="35"/>
    </location>
    <ligand>
        <name>Zn(2+)</name>
        <dbReference type="ChEBI" id="CHEBI:29105"/>
    </ligand>
</feature>
<feature type="binding site" evidence="2">
    <location>
        <position position="38"/>
    </location>
    <ligand>
        <name>Zn(2+)</name>
        <dbReference type="ChEBI" id="CHEBI:29105"/>
    </ligand>
</feature>
<feature type="binding site" evidence="1">
    <location>
        <begin position="119"/>
        <end position="126"/>
    </location>
    <ligand>
        <name>ATP</name>
        <dbReference type="ChEBI" id="CHEBI:30616"/>
    </ligand>
</feature>